<feature type="peptide" id="PRO_0000436536" description="Potassium channel toxin alpha-KTx 2.15" evidence="3">
    <location>
        <begin position="1"/>
        <end position="38"/>
    </location>
</feature>
<feature type="site" description="Basic residue of the functional dyad" evidence="1">
    <location>
        <position position="28"/>
    </location>
</feature>
<feature type="site" description="Aromatic residue of the functional dyad" evidence="1">
    <location>
        <position position="37"/>
    </location>
</feature>
<feature type="disulfide bond" evidence="1">
    <location>
        <begin position="7"/>
        <end position="29"/>
    </location>
</feature>
<feature type="disulfide bond" evidence="1">
    <location>
        <begin position="13"/>
        <end position="34"/>
    </location>
</feature>
<feature type="disulfide bond" evidence="1">
    <location>
        <begin position="17"/>
        <end position="36"/>
    </location>
</feature>
<name>KAX2F_CENTE</name>
<evidence type="ECO:0000250" key="1">
    <source>
        <dbReference type="UniProtKB" id="O46028"/>
    </source>
</evidence>
<evidence type="ECO:0000250" key="2">
    <source>
        <dbReference type="UniProtKB" id="P40755"/>
    </source>
</evidence>
<evidence type="ECO:0000269" key="3">
    <source>
    </source>
</evidence>
<evidence type="ECO:0000303" key="4">
    <source>
    </source>
</evidence>
<evidence type="ECO:0000305" key="5"/>
<evidence type="ECO:0000305" key="6">
    <source>
    </source>
</evidence>
<reference key="1">
    <citation type="journal article" date="2016" name="Toxicon">
        <title>Isolation, chemical and functional characterization of several new K(+)-channel blocking peptides from the venom of the scorpion Centruroides tecomanus.</title>
        <authorList>
            <person name="Olamendi-Portugal T."/>
            <person name="Bartok A."/>
            <person name="Zamudio-Zuniga F."/>
            <person name="Balajthy A."/>
            <person name="Becerril B."/>
            <person name="Panyi G."/>
            <person name="Possani L.D."/>
        </authorList>
    </citation>
    <scope>PROTEIN SEQUENCE</scope>
    <scope>FUNCTION</scope>
    <scope>SUBCELLULAR LOCATION</scope>
    <scope>MASS SPECTROMETRY</scope>
    <source>
        <tissue>Venom</tissue>
    </source>
</reference>
<accession>C0HJW1</accession>
<organism>
    <name type="scientific">Centruroides tecomanus</name>
    <name type="common">Scorpion</name>
    <name type="synonym">Centruroides limpidus tecomanus</name>
    <dbReference type="NCBI Taxonomy" id="1028682"/>
    <lineage>
        <taxon>Eukaryota</taxon>
        <taxon>Metazoa</taxon>
        <taxon>Ecdysozoa</taxon>
        <taxon>Arthropoda</taxon>
        <taxon>Chelicerata</taxon>
        <taxon>Arachnida</taxon>
        <taxon>Scorpiones</taxon>
        <taxon>Buthida</taxon>
        <taxon>Buthoidea</taxon>
        <taxon>Buthidae</taxon>
        <taxon>Centruroides</taxon>
    </lineage>
</organism>
<protein>
    <recommendedName>
        <fullName evidence="4">Potassium channel toxin alpha-KTx 2.15</fullName>
    </recommendedName>
    <alternativeName>
        <fullName evidence="4">Toxin II.10.5</fullName>
    </alternativeName>
</protein>
<proteinExistence type="evidence at protein level"/>
<sequence length="38" mass="4129">IFINVKCSSPQQCLKPCKKAFGQHAGGKCINGKCKCYP</sequence>
<dbReference type="SMR" id="C0HJW1"/>
<dbReference type="GO" id="GO:0005576">
    <property type="term" value="C:extracellular region"/>
    <property type="evidence" value="ECO:0007669"/>
    <property type="project" value="UniProtKB-SubCell"/>
</dbReference>
<dbReference type="GO" id="GO:0008200">
    <property type="term" value="F:ion channel inhibitor activity"/>
    <property type="evidence" value="ECO:0007669"/>
    <property type="project" value="InterPro"/>
</dbReference>
<dbReference type="GO" id="GO:0015459">
    <property type="term" value="F:potassium channel regulator activity"/>
    <property type="evidence" value="ECO:0007669"/>
    <property type="project" value="UniProtKB-KW"/>
</dbReference>
<dbReference type="GO" id="GO:0090729">
    <property type="term" value="F:toxin activity"/>
    <property type="evidence" value="ECO:0007669"/>
    <property type="project" value="UniProtKB-KW"/>
</dbReference>
<dbReference type="FunFam" id="3.30.30.10:FF:000009">
    <property type="entry name" value="Potassium channel toxin alpha-KTx 4.3"/>
    <property type="match status" value="1"/>
</dbReference>
<dbReference type="Gene3D" id="3.30.30.10">
    <property type="entry name" value="Knottin, scorpion toxin-like"/>
    <property type="match status" value="1"/>
</dbReference>
<dbReference type="InterPro" id="IPR036574">
    <property type="entry name" value="Scorpion_toxin-like_sf"/>
</dbReference>
<dbReference type="InterPro" id="IPR001947">
    <property type="entry name" value="Scorpion_toxinS_K_inh"/>
</dbReference>
<dbReference type="Pfam" id="PF00451">
    <property type="entry name" value="Toxin_2"/>
    <property type="match status" value="1"/>
</dbReference>
<dbReference type="PRINTS" id="PR00286">
    <property type="entry name" value="CHARYBDTOXIN"/>
</dbReference>
<dbReference type="SUPFAM" id="SSF57095">
    <property type="entry name" value="Scorpion toxin-like"/>
    <property type="match status" value="1"/>
</dbReference>
<dbReference type="PROSITE" id="PS01138">
    <property type="entry name" value="SCORP_SHORT_TOXIN"/>
    <property type="match status" value="1"/>
</dbReference>
<keyword id="KW-1221">Calcium-activated potassium channel impairing toxin</keyword>
<keyword id="KW-0903">Direct protein sequencing</keyword>
<keyword id="KW-1015">Disulfide bond</keyword>
<keyword id="KW-0872">Ion channel impairing toxin</keyword>
<keyword id="KW-0528">Neurotoxin</keyword>
<keyword id="KW-0632">Potassium channel impairing toxin</keyword>
<keyword id="KW-0964">Secreted</keyword>
<keyword id="KW-0800">Toxin</keyword>
<keyword id="KW-1220">Voltage-gated potassium channel impairing toxin</keyword>
<comment type="function">
    <text evidence="3">Blocks human voltage-gated potassium channels Kv1.2/KCNA2 (IC(50)=0.3 nM), Kv1.3/KCNA3 (IC(50)=8.3 nM) and Shaker IR (with inactivation domain removed) (IC(50)=12 nM) and blocks intermediate conductance calcium-activated potassium channel KCa3.1/KCNN4 (IC(50)=6.4 nM).</text>
</comment>
<comment type="subcellular location">
    <subcellularLocation>
        <location evidence="3">Secreted</location>
    </subcellularLocation>
</comment>
<comment type="tissue specificity">
    <text evidence="6">Expressed by the venom gland.</text>
</comment>
<comment type="domain">
    <text evidence="2">Has the structural arrangement of an alpha-helix connected to a beta-sheet by disulfide bonds (CSalpha/beta).</text>
</comment>
<comment type="mass spectrometry" mass="4124.0" method="Unknown" evidence="3"/>
<comment type="miscellaneous">
    <text evidence="3">Negative results: does not block voltage-gated potassium channel Kv1.1/KCNA1.</text>
</comment>
<comment type="similarity">
    <text evidence="5">Belongs to the short scorpion toxin superfamily. Potassium channel inhibitor family. Alpha-KTx 02 subfamily.</text>
</comment>